<feature type="chain" id="PRO_0000156843" description="Oxaloacetate tautomerase FMP41, mitochondrial">
    <location>
        <begin position="1"/>
        <end position="259"/>
    </location>
</feature>
<feature type="binding site" evidence="1">
    <location>
        <position position="87"/>
    </location>
    <ligand>
        <name>Mg(2+)</name>
        <dbReference type="ChEBI" id="CHEBI:18420"/>
    </ligand>
</feature>
<feature type="binding site" evidence="1">
    <location>
        <position position="89"/>
    </location>
    <ligand>
        <name>Mg(2+)</name>
        <dbReference type="ChEBI" id="CHEBI:18420"/>
    </ligand>
</feature>
<feature type="binding site" evidence="1">
    <location>
        <position position="121"/>
    </location>
    <ligand>
        <name>Mg(2+)</name>
        <dbReference type="ChEBI" id="CHEBI:18420"/>
    </ligand>
</feature>
<feature type="helix" evidence="10">
    <location>
        <begin position="4"/>
        <end position="8"/>
    </location>
</feature>
<feature type="strand" evidence="10">
    <location>
        <begin position="12"/>
        <end position="15"/>
    </location>
</feature>
<feature type="helix" evidence="10">
    <location>
        <begin position="23"/>
        <end position="27"/>
    </location>
</feature>
<feature type="strand" evidence="10">
    <location>
        <begin position="36"/>
        <end position="39"/>
    </location>
</feature>
<feature type="helix" evidence="10">
    <location>
        <begin position="41"/>
        <end position="43"/>
    </location>
</feature>
<feature type="strand" evidence="10">
    <location>
        <begin position="44"/>
        <end position="46"/>
    </location>
</feature>
<feature type="strand" evidence="10">
    <location>
        <begin position="76"/>
        <end position="78"/>
    </location>
</feature>
<feature type="strand" evidence="10">
    <location>
        <begin position="84"/>
        <end position="86"/>
    </location>
</feature>
<feature type="strand" evidence="10">
    <location>
        <begin position="88"/>
        <end position="94"/>
    </location>
</feature>
<feature type="helix" evidence="10">
    <location>
        <begin position="106"/>
        <end position="108"/>
    </location>
</feature>
<feature type="helix" evidence="10">
    <location>
        <begin position="110"/>
        <end position="112"/>
    </location>
</feature>
<feature type="strand" evidence="10">
    <location>
        <begin position="113"/>
        <end position="120"/>
    </location>
</feature>
<feature type="helix" evidence="10">
    <location>
        <begin position="125"/>
        <end position="134"/>
    </location>
</feature>
<feature type="helix" evidence="10">
    <location>
        <begin position="139"/>
        <end position="143"/>
    </location>
</feature>
<feature type="strand" evidence="10">
    <location>
        <begin position="148"/>
        <end position="150"/>
    </location>
</feature>
<feature type="helix" evidence="10">
    <location>
        <begin position="156"/>
        <end position="162"/>
    </location>
</feature>
<feature type="turn" evidence="10">
    <location>
        <begin position="167"/>
        <end position="169"/>
    </location>
</feature>
<feature type="strand" evidence="10">
    <location>
        <begin position="170"/>
        <end position="176"/>
    </location>
</feature>
<feature type="strand" evidence="10">
    <location>
        <begin position="179"/>
        <end position="185"/>
    </location>
</feature>
<feature type="helix" evidence="10">
    <location>
        <begin position="186"/>
        <end position="188"/>
    </location>
</feature>
<feature type="strand" evidence="10">
    <location>
        <begin position="189"/>
        <end position="191"/>
    </location>
</feature>
<feature type="helix" evidence="10">
    <location>
        <begin position="193"/>
        <end position="201"/>
    </location>
</feature>
<feature type="strand" evidence="10">
    <location>
        <begin position="211"/>
        <end position="213"/>
    </location>
</feature>
<feature type="strand" evidence="10">
    <location>
        <begin position="221"/>
        <end position="223"/>
    </location>
</feature>
<feature type="strand" evidence="10">
    <location>
        <begin position="228"/>
        <end position="235"/>
    </location>
</feature>
<feature type="strand" evidence="10">
    <location>
        <begin position="238"/>
        <end position="249"/>
    </location>
</feature>
<evidence type="ECO:0000250" key="1">
    <source>
        <dbReference type="UniProtKB" id="Q6P587"/>
    </source>
</evidence>
<evidence type="ECO:0000269" key="2">
    <source>
    </source>
</evidence>
<evidence type="ECO:0000269" key="3">
    <source>
    </source>
</evidence>
<evidence type="ECO:0000269" key="4">
    <source>
    </source>
</evidence>
<evidence type="ECO:0000269" key="5">
    <source>
    </source>
</evidence>
<evidence type="ECO:0000269" key="6">
    <source>
    </source>
</evidence>
<evidence type="ECO:0000303" key="7">
    <source>
    </source>
</evidence>
<evidence type="ECO:0000305" key="8"/>
<evidence type="ECO:0000312" key="9">
    <source>
        <dbReference type="SGD" id="S000005112"/>
    </source>
</evidence>
<evidence type="ECO:0007829" key="10">
    <source>
        <dbReference type="PDB" id="1NKQ"/>
    </source>
</evidence>
<organism>
    <name type="scientific">Saccharomyces cerevisiae (strain ATCC 204508 / S288c)</name>
    <name type="common">Baker's yeast</name>
    <dbReference type="NCBI Taxonomy" id="559292"/>
    <lineage>
        <taxon>Eukaryota</taxon>
        <taxon>Fungi</taxon>
        <taxon>Dikarya</taxon>
        <taxon>Ascomycota</taxon>
        <taxon>Saccharomycotina</taxon>
        <taxon>Saccharomycetes</taxon>
        <taxon>Saccharomycetales</taxon>
        <taxon>Saccharomycetaceae</taxon>
        <taxon>Saccharomyces</taxon>
    </lineage>
</organism>
<keyword id="KW-0002">3D-structure</keyword>
<keyword id="KW-0413">Isomerase</keyword>
<keyword id="KW-0460">Magnesium</keyword>
<keyword id="KW-0479">Metal-binding</keyword>
<keyword id="KW-0496">Mitochondrion</keyword>
<keyword id="KW-1185">Reference proteome</keyword>
<keyword id="KW-0346">Stress response</keyword>
<name>FMP41_YEAST</name>
<reference key="1">
    <citation type="journal article" date="1996" name="Yeast">
        <title>The sequence of 36.8 kb from the left arm of chromosome XIV reveals 24 complete open reading frames: 18 correspond to new genes, one of which encodes a protein similar to the human myotonic dystrophy kinase.</title>
        <authorList>
            <person name="Nasr F."/>
            <person name="Becam A.-M."/>
            <person name="Herbert C.J."/>
        </authorList>
    </citation>
    <scope>NUCLEOTIDE SEQUENCE [GENOMIC DNA]</scope>
    <source>
        <strain>ATCC 96604 / S288c / FY1679</strain>
    </source>
</reference>
<reference key="2">
    <citation type="journal article" date="1997" name="Nature">
        <title>The nucleotide sequence of Saccharomyces cerevisiae chromosome XIV and its evolutionary implications.</title>
        <authorList>
            <person name="Philippsen P."/>
            <person name="Kleine K."/>
            <person name="Poehlmann R."/>
            <person name="Duesterhoeft A."/>
            <person name="Hamberg K."/>
            <person name="Hegemann J.H."/>
            <person name="Obermaier B."/>
            <person name="Urrestarazu L.A."/>
            <person name="Aert R."/>
            <person name="Albermann K."/>
            <person name="Altmann R."/>
            <person name="Andre B."/>
            <person name="Baladron V."/>
            <person name="Ballesta J.P.G."/>
            <person name="Becam A.-M."/>
            <person name="Beinhauer J.D."/>
            <person name="Boskovic J."/>
            <person name="Buitrago M.J."/>
            <person name="Bussereau F."/>
            <person name="Coster F."/>
            <person name="Crouzet M."/>
            <person name="D'Angelo M."/>
            <person name="Dal Pero F."/>
            <person name="De Antoni A."/>
            <person name="del Rey F."/>
            <person name="Doignon F."/>
            <person name="Domdey H."/>
            <person name="Dubois E."/>
            <person name="Fiedler T.A."/>
            <person name="Fleig U."/>
            <person name="Floeth M."/>
            <person name="Fritz C."/>
            <person name="Gaillardin C."/>
            <person name="Garcia-Cantalejo J.M."/>
            <person name="Glansdorff N."/>
            <person name="Goffeau A."/>
            <person name="Gueldener U."/>
            <person name="Herbert C.J."/>
            <person name="Heumann K."/>
            <person name="Heuss-Neitzel D."/>
            <person name="Hilbert H."/>
            <person name="Hinni K."/>
            <person name="Iraqui Houssaini I."/>
            <person name="Jacquet M."/>
            <person name="Jimenez A."/>
            <person name="Jonniaux J.-L."/>
            <person name="Karpfinger-Hartl L."/>
            <person name="Lanfranchi G."/>
            <person name="Lepingle A."/>
            <person name="Levesque H."/>
            <person name="Lyck R."/>
            <person name="Maftahi M."/>
            <person name="Mallet L."/>
            <person name="Maurer C.T.C."/>
            <person name="Messenguy F."/>
            <person name="Mewes H.-W."/>
            <person name="Moestl D."/>
            <person name="Nasr F."/>
            <person name="Nicaud J.-M."/>
            <person name="Niedenthal R.K."/>
            <person name="Pandolfo D."/>
            <person name="Pierard A."/>
            <person name="Piravandi E."/>
            <person name="Planta R.J."/>
            <person name="Pohl T.M."/>
            <person name="Purnelle B."/>
            <person name="Rebischung C."/>
            <person name="Remacha M.A."/>
            <person name="Revuelta J.L."/>
            <person name="Rinke M."/>
            <person name="Saiz J.E."/>
            <person name="Sartorello F."/>
            <person name="Scherens B."/>
            <person name="Sen-Gupta M."/>
            <person name="Soler-Mira A."/>
            <person name="Urbanus J.H.M."/>
            <person name="Valle G."/>
            <person name="Van Dyck L."/>
            <person name="Verhasselt P."/>
            <person name="Vierendeels F."/>
            <person name="Vissers S."/>
            <person name="Voet M."/>
            <person name="Volckaert G."/>
            <person name="Wach A."/>
            <person name="Wambutt R."/>
            <person name="Wedler H."/>
            <person name="Zollner A."/>
            <person name="Hani J."/>
        </authorList>
    </citation>
    <scope>NUCLEOTIDE SEQUENCE [LARGE SCALE GENOMIC DNA]</scope>
    <source>
        <strain>ATCC 204508 / S288c</strain>
    </source>
</reference>
<reference key="3">
    <citation type="journal article" date="2014" name="G3 (Bethesda)">
        <title>The reference genome sequence of Saccharomyces cerevisiae: Then and now.</title>
        <authorList>
            <person name="Engel S.R."/>
            <person name="Dietrich F.S."/>
            <person name="Fisk D.G."/>
            <person name="Binkley G."/>
            <person name="Balakrishnan R."/>
            <person name="Costanzo M.C."/>
            <person name="Dwight S.S."/>
            <person name="Hitz B.C."/>
            <person name="Karra K."/>
            <person name="Nash R.S."/>
            <person name="Weng S."/>
            <person name="Wong E.D."/>
            <person name="Lloyd P."/>
            <person name="Skrzypek M.S."/>
            <person name="Miyasato S.R."/>
            <person name="Simison M."/>
            <person name="Cherry J.M."/>
        </authorList>
    </citation>
    <scope>GENOME REANNOTATION</scope>
    <source>
        <strain>ATCC 204508 / S288c</strain>
    </source>
</reference>
<reference key="4">
    <citation type="journal article" date="2003" name="Nature">
        <title>Global analysis of protein localization in budding yeast.</title>
        <authorList>
            <person name="Huh W.-K."/>
            <person name="Falvo J.V."/>
            <person name="Gerke L.C."/>
            <person name="Carroll A.S."/>
            <person name="Howson R.W."/>
            <person name="Weissman J.S."/>
            <person name="O'Shea E.K."/>
        </authorList>
    </citation>
    <scope>SUBCELLULAR LOCATION [LARGE SCALE ANALYSIS]</scope>
</reference>
<reference key="5">
    <citation type="journal article" date="2003" name="Nature">
        <title>Global analysis of protein expression in yeast.</title>
        <authorList>
            <person name="Ghaemmaghami S."/>
            <person name="Huh W.-K."/>
            <person name="Bower K."/>
            <person name="Howson R.W."/>
            <person name="Belle A."/>
            <person name="Dephoure N."/>
            <person name="O'Shea E.K."/>
            <person name="Weissman J.S."/>
        </authorList>
    </citation>
    <scope>LEVEL OF PROTEIN EXPRESSION [LARGE SCALE ANALYSIS]</scope>
</reference>
<reference key="6">
    <citation type="journal article" date="2003" name="Proc. Natl. Acad. Sci. U.S.A.">
        <title>The proteome of Saccharomyces cerevisiae mitochondria.</title>
        <authorList>
            <person name="Sickmann A."/>
            <person name="Reinders J."/>
            <person name="Wagner Y."/>
            <person name="Joppich C."/>
            <person name="Zahedi R.P."/>
            <person name="Meyer H.E."/>
            <person name="Schoenfisch B."/>
            <person name="Perschil I."/>
            <person name="Chacinska A."/>
            <person name="Guiard B."/>
            <person name="Rehling P."/>
            <person name="Pfanner N."/>
            <person name="Meisinger C."/>
        </authorList>
    </citation>
    <scope>SUBCELLULAR LOCATION [LARGE SCALE ANALYSIS]</scope>
    <source>
        <strain>ATCC 76625 / YPH499</strain>
    </source>
</reference>
<reference key="7">
    <citation type="journal article" date="2008" name="RNA">
        <title>Yeast translational response to high salinity: global analysis reveals regulation at multiple levels.</title>
        <authorList>
            <person name="Melamed D."/>
            <person name="Pnueli L."/>
            <person name="Arava Y."/>
        </authorList>
    </citation>
    <scope>INDUCTION</scope>
</reference>
<reference key="8">
    <citation type="journal article" date="2012" name="Proc. Natl. Acad. Sci. U.S.A.">
        <title>N-terminal acetylome analyses and functional insights of the N-terminal acetyltransferase NatB.</title>
        <authorList>
            <person name="Van Damme P."/>
            <person name="Lasa M."/>
            <person name="Polevoda B."/>
            <person name="Gazquez C."/>
            <person name="Elosegui-Artola A."/>
            <person name="Kim D.S."/>
            <person name="De Juan-Pardo E."/>
            <person name="Demeyer K."/>
            <person name="Hole K."/>
            <person name="Larrea E."/>
            <person name="Timmerman E."/>
            <person name="Prieto J."/>
            <person name="Arnesen T."/>
            <person name="Sherman F."/>
            <person name="Gevaert K."/>
            <person name="Aldabe R."/>
        </authorList>
    </citation>
    <scope>IDENTIFICATION BY MASS SPECTROMETRY [LARGE SCALE ANALYSIS]</scope>
</reference>
<reference key="9">
    <citation type="journal article" date="2024" name="Nat. Commun.">
        <title>A universal metabolite repair enzyme removes a strong inhibitor of the TCA cycle.</title>
        <authorList>
            <person name="Zmuda A.J."/>
            <person name="Kang X."/>
            <person name="Wissbroecker K.B."/>
            <person name="Freund Saxhaug K."/>
            <person name="Costa K.C."/>
            <person name="Hegeman A.D."/>
            <person name="Niehaus T.D."/>
        </authorList>
    </citation>
    <scope>FUNCTION</scope>
    <scope>CATALYTIC ACTIVITY</scope>
    <scope>BIOPHYSICOCHEMICAL PROPERTIES</scope>
</reference>
<reference key="10">
    <citation type="submission" date="2005-01" db="PDB data bank">
        <title>Crystal structure of yeast hypothetical protein ynq8_yeast.</title>
        <authorList>
            <consortium name="New York structural genomix research consortium (NYSGXRC)"/>
        </authorList>
    </citation>
    <scope>X-RAY CRYSTALLOGRAPHY (2.2 ANGSTROMS)</scope>
</reference>
<sequence>MSYNYLKAARKIICIGRNYAAHIKELNNSTPKQPFFFLKPTSSIVTPLSSSLVKTTRPANSTFNGLNEDGTNPGPIFIPRGVKVHHEIELALIVSKHLSNVTKMKPEEVYDSISGVALALDLTARNVQDEAKKKGLPWTISKGFDTFMPISAIVSREKFSSYKSNLQDIFRVKCSVNGQLRQDGGTNLMLHPLHKILQHISTMISLEPGDIILTGTPAGVGELKPGDRVHCELLQNNDNIVDMNFECENRPGPYEFRET</sequence>
<dbReference type="EC" id="5.3.2.2" evidence="6"/>
<dbReference type="EMBL" id="X92517">
    <property type="protein sequence ID" value="CAA63271.1"/>
    <property type="molecule type" value="Genomic_DNA"/>
</dbReference>
<dbReference type="EMBL" id="Z71444">
    <property type="protein sequence ID" value="CAA96055.1"/>
    <property type="molecule type" value="Genomic_DNA"/>
</dbReference>
<dbReference type="EMBL" id="BK006947">
    <property type="protein sequence ID" value="DAA10380.1"/>
    <property type="molecule type" value="Genomic_DNA"/>
</dbReference>
<dbReference type="PIR" id="S60959">
    <property type="entry name" value="S60959"/>
</dbReference>
<dbReference type="RefSeq" id="NP_014231.1">
    <property type="nucleotide sequence ID" value="NM_001183006.1"/>
</dbReference>
<dbReference type="PDB" id="1NKQ">
    <property type="method" value="X-ray"/>
    <property type="resolution" value="2.20 A"/>
    <property type="chains" value="A/B/C/D/E/F=1-259"/>
</dbReference>
<dbReference type="PDBsum" id="1NKQ"/>
<dbReference type="SMR" id="P53889"/>
<dbReference type="BioGRID" id="35660">
    <property type="interactions" value="37"/>
</dbReference>
<dbReference type="FunCoup" id="P53889">
    <property type="interactions" value="574"/>
</dbReference>
<dbReference type="IntAct" id="P53889">
    <property type="interactions" value="12"/>
</dbReference>
<dbReference type="MINT" id="P53889"/>
<dbReference type="STRING" id="4932.YNL168C"/>
<dbReference type="iPTMnet" id="P53889"/>
<dbReference type="PaxDb" id="4932-YNL168C"/>
<dbReference type="PeptideAtlas" id="P53889"/>
<dbReference type="EnsemblFungi" id="YNL168C_mRNA">
    <property type="protein sequence ID" value="YNL168C"/>
    <property type="gene ID" value="YNL168C"/>
</dbReference>
<dbReference type="GeneID" id="855553"/>
<dbReference type="KEGG" id="sce:YNL168C"/>
<dbReference type="AGR" id="SGD:S000005112"/>
<dbReference type="SGD" id="S000005112">
    <property type="gene designation" value="FMP41"/>
</dbReference>
<dbReference type="VEuPathDB" id="FungiDB:YNL168C"/>
<dbReference type="eggNOG" id="KOG1535">
    <property type="taxonomic scope" value="Eukaryota"/>
</dbReference>
<dbReference type="GeneTree" id="ENSGT00940000160452"/>
<dbReference type="HOGENOM" id="CLU_028458_5_0_1"/>
<dbReference type="InParanoid" id="P53889"/>
<dbReference type="OMA" id="NCRKVIC"/>
<dbReference type="OrthoDB" id="74910at2759"/>
<dbReference type="BioCyc" id="YEAST:G3O-33184-MONOMER"/>
<dbReference type="Reactome" id="R-SCE-70268">
    <property type="pathway name" value="Pyruvate metabolism"/>
</dbReference>
<dbReference type="BioGRID-ORCS" id="855553">
    <property type="hits" value="0 hits in 10 CRISPR screens"/>
</dbReference>
<dbReference type="EvolutionaryTrace" id="P53889"/>
<dbReference type="PRO" id="PR:P53889"/>
<dbReference type="Proteomes" id="UP000002311">
    <property type="component" value="Chromosome XIV"/>
</dbReference>
<dbReference type="RNAct" id="P53889">
    <property type="molecule type" value="protein"/>
</dbReference>
<dbReference type="GO" id="GO:0005739">
    <property type="term" value="C:mitochondrion"/>
    <property type="evidence" value="ECO:0007005"/>
    <property type="project" value="SGD"/>
</dbReference>
<dbReference type="GO" id="GO:0018773">
    <property type="term" value="F:acetylpyruvate hydrolase activity"/>
    <property type="evidence" value="ECO:0000318"/>
    <property type="project" value="GO_Central"/>
</dbReference>
<dbReference type="GO" id="GO:0046872">
    <property type="term" value="F:metal ion binding"/>
    <property type="evidence" value="ECO:0007669"/>
    <property type="project" value="UniProtKB-KW"/>
</dbReference>
<dbReference type="GO" id="GO:0050163">
    <property type="term" value="F:oxaloacetate tautomerase activity"/>
    <property type="evidence" value="ECO:0000314"/>
    <property type="project" value="UniProtKB"/>
</dbReference>
<dbReference type="GO" id="GO:0006107">
    <property type="term" value="P:oxaloacetate metabolic process"/>
    <property type="evidence" value="ECO:0000314"/>
    <property type="project" value="UniProtKB"/>
</dbReference>
<dbReference type="FunFam" id="3.90.850.10:FF:000014">
    <property type="entry name" value="Uncharacterized mitochondrial hydrolase FMP41"/>
    <property type="match status" value="1"/>
</dbReference>
<dbReference type="Gene3D" id="3.90.850.10">
    <property type="entry name" value="Fumarylacetoacetase-like, C-terminal domain"/>
    <property type="match status" value="1"/>
</dbReference>
<dbReference type="InterPro" id="IPR011234">
    <property type="entry name" value="Fumarylacetoacetase-like_C"/>
</dbReference>
<dbReference type="InterPro" id="IPR036663">
    <property type="entry name" value="Fumarylacetoacetase_C_sf"/>
</dbReference>
<dbReference type="PANTHER" id="PTHR11820">
    <property type="entry name" value="ACYLPYRUVASE"/>
    <property type="match status" value="1"/>
</dbReference>
<dbReference type="PANTHER" id="PTHR11820:SF7">
    <property type="entry name" value="ACYLPYRUVASE FAHD1, MITOCHONDRIAL"/>
    <property type="match status" value="1"/>
</dbReference>
<dbReference type="Pfam" id="PF01557">
    <property type="entry name" value="FAA_hydrolase"/>
    <property type="match status" value="1"/>
</dbReference>
<dbReference type="SUPFAM" id="SSF56529">
    <property type="entry name" value="FAH"/>
    <property type="match status" value="1"/>
</dbReference>
<comment type="function">
    <text evidence="6">Tautomerase that converts enol-oxaloacetate, a strong inhibitor of succinate dehydrogenase, to the physiological keto form of oxaloacetate.</text>
</comment>
<comment type="catalytic activity">
    <reaction evidence="6">
        <text>oxaloacetate = enol-oxaloacetate</text>
        <dbReference type="Rhea" id="RHEA:16021"/>
        <dbReference type="ChEBI" id="CHEBI:16452"/>
        <dbReference type="ChEBI" id="CHEBI:17479"/>
        <dbReference type="EC" id="5.3.2.2"/>
    </reaction>
    <physiologicalReaction direction="right-to-left" evidence="6">
        <dbReference type="Rhea" id="RHEA:16023"/>
    </physiologicalReaction>
</comment>
<comment type="cofactor">
    <cofactor evidence="1">
        <name>Mg(2+)</name>
        <dbReference type="ChEBI" id="CHEBI:18420"/>
    </cofactor>
    <cofactor evidence="1">
        <name>Mn(2+)</name>
        <dbReference type="ChEBI" id="CHEBI:29035"/>
    </cofactor>
    <text evidence="1">Requires a divalent metal cation for activity.</text>
</comment>
<comment type="biophysicochemical properties">
    <kinetics>
        <KM evidence="6">219 uM for enol-oxaloacetate</KM>
        <Vmax evidence="6">717.0 umol/min/mg enzyme</Vmax>
        <text evidence="6">kcat is 369 sec(-1) with enol-oxaloacetate as substrate.</text>
    </kinetics>
</comment>
<comment type="subcellular location">
    <subcellularLocation>
        <location evidence="2 4">Mitochondrion</location>
    </subcellularLocation>
</comment>
<comment type="induction">
    <text evidence="5">In high salinity conditions.</text>
</comment>
<comment type="miscellaneous">
    <text evidence="3">Present with 2550 molecules/cell in log phase SD medium.</text>
</comment>
<comment type="similarity">
    <text evidence="8">Belongs to the FAH family.</text>
</comment>
<proteinExistence type="evidence at protein level"/>
<gene>
    <name evidence="7 9" type="primary">FMP41</name>
    <name type="ordered locus">YNL168C</name>
    <name type="ORF">N1696</name>
</gene>
<protein>
    <recommendedName>
        <fullName evidence="8">Oxaloacetate tautomerase FMP41, mitochondrial</fullName>
        <ecNumber evidence="6">5.3.2.2</ecNumber>
    </recommendedName>
</protein>
<accession>P53889</accession>
<accession>D6W114</accession>